<keyword id="KW-0997">Cell inner membrane</keyword>
<keyword id="KW-1003">Cell membrane</keyword>
<keyword id="KW-0444">Lipid biosynthesis</keyword>
<keyword id="KW-0443">Lipid metabolism</keyword>
<keyword id="KW-0472">Membrane</keyword>
<keyword id="KW-0594">Phospholipid biosynthesis</keyword>
<keyword id="KW-1208">Phospholipid metabolism</keyword>
<keyword id="KW-0808">Transferase</keyword>
<keyword id="KW-0812">Transmembrane</keyword>
<keyword id="KW-1133">Transmembrane helix</keyword>
<evidence type="ECO:0000255" key="1">
    <source>
        <dbReference type="HAMAP-Rule" id="MF_01043"/>
    </source>
</evidence>
<reference key="1">
    <citation type="submission" date="2009-01" db="EMBL/GenBank/DDBJ databases">
        <title>Complete sequence of Anaeromyxobacter dehalogenans 2CP-1.</title>
        <authorList>
            <person name="Lucas S."/>
            <person name="Copeland A."/>
            <person name="Lapidus A."/>
            <person name="Glavina del Rio T."/>
            <person name="Dalin E."/>
            <person name="Tice H."/>
            <person name="Bruce D."/>
            <person name="Goodwin L."/>
            <person name="Pitluck S."/>
            <person name="Saunders E."/>
            <person name="Brettin T."/>
            <person name="Detter J.C."/>
            <person name="Han C."/>
            <person name="Larimer F."/>
            <person name="Land M."/>
            <person name="Hauser L."/>
            <person name="Kyrpides N."/>
            <person name="Ovchinnikova G."/>
            <person name="Beliaev A.S."/>
            <person name="Richardson P."/>
        </authorList>
    </citation>
    <scope>NUCLEOTIDE SEQUENCE [LARGE SCALE GENOMIC DNA]</scope>
    <source>
        <strain>2CP-1 / ATCC BAA-258</strain>
    </source>
</reference>
<sequence length="201" mass="20487">MSPDLLGALLVAAGYLAGSIPFGVVLGRLVLGVDVRTVGSGNIGATNVARAGGKKMGVLVLVLDAAKAIVPILVARRVLGGTPHAEFWVTAVAVAAFVGHLFPVWLGFKGGKGVATGLGIFAVLAPWAALAGLVGYAVAYGLTRISSVGSLTGTALCAAGGFATYGPRHPVSWAGLAIALLIFVRHRENIRRLVRGEEKKV</sequence>
<accession>B8JBQ8</accession>
<organism>
    <name type="scientific">Anaeromyxobacter dehalogenans (strain 2CP-1 / ATCC BAA-258)</name>
    <dbReference type="NCBI Taxonomy" id="455488"/>
    <lineage>
        <taxon>Bacteria</taxon>
        <taxon>Pseudomonadati</taxon>
        <taxon>Myxococcota</taxon>
        <taxon>Myxococcia</taxon>
        <taxon>Myxococcales</taxon>
        <taxon>Cystobacterineae</taxon>
        <taxon>Anaeromyxobacteraceae</taxon>
        <taxon>Anaeromyxobacter</taxon>
    </lineage>
</organism>
<protein>
    <recommendedName>
        <fullName evidence="1">Glycerol-3-phosphate acyltransferase</fullName>
    </recommendedName>
    <alternativeName>
        <fullName evidence="1">Acyl-PO4 G3P acyltransferase</fullName>
    </alternativeName>
    <alternativeName>
        <fullName evidence="1">Acyl-phosphate--glycerol-3-phosphate acyltransferase</fullName>
    </alternativeName>
    <alternativeName>
        <fullName evidence="1">G3P acyltransferase</fullName>
        <shortName evidence="1">GPAT</shortName>
        <ecNumber evidence="1">2.3.1.275</ecNumber>
    </alternativeName>
    <alternativeName>
        <fullName evidence="1">Lysophosphatidic acid synthase</fullName>
        <shortName evidence="1">LPA synthase</shortName>
    </alternativeName>
</protein>
<dbReference type="EC" id="2.3.1.275" evidence="1"/>
<dbReference type="EMBL" id="CP001359">
    <property type="protein sequence ID" value="ACL67666.1"/>
    <property type="molecule type" value="Genomic_DNA"/>
</dbReference>
<dbReference type="RefSeq" id="WP_015935360.1">
    <property type="nucleotide sequence ID" value="NC_011891.1"/>
</dbReference>
<dbReference type="SMR" id="B8JBQ8"/>
<dbReference type="KEGG" id="acp:A2cp1_4349"/>
<dbReference type="HOGENOM" id="CLU_081254_1_0_7"/>
<dbReference type="UniPathway" id="UPA00085"/>
<dbReference type="Proteomes" id="UP000007089">
    <property type="component" value="Chromosome"/>
</dbReference>
<dbReference type="GO" id="GO:0005886">
    <property type="term" value="C:plasma membrane"/>
    <property type="evidence" value="ECO:0007669"/>
    <property type="project" value="UniProtKB-SubCell"/>
</dbReference>
<dbReference type="GO" id="GO:0043772">
    <property type="term" value="F:acyl-phosphate glycerol-3-phosphate acyltransferase activity"/>
    <property type="evidence" value="ECO:0007669"/>
    <property type="project" value="UniProtKB-UniRule"/>
</dbReference>
<dbReference type="GO" id="GO:0008654">
    <property type="term" value="P:phospholipid biosynthetic process"/>
    <property type="evidence" value="ECO:0007669"/>
    <property type="project" value="UniProtKB-UniRule"/>
</dbReference>
<dbReference type="HAMAP" id="MF_01043">
    <property type="entry name" value="PlsY"/>
    <property type="match status" value="1"/>
</dbReference>
<dbReference type="InterPro" id="IPR003811">
    <property type="entry name" value="G3P_acylTferase_PlsY"/>
</dbReference>
<dbReference type="NCBIfam" id="TIGR00023">
    <property type="entry name" value="glycerol-3-phosphate 1-O-acyltransferase PlsY"/>
    <property type="match status" value="1"/>
</dbReference>
<dbReference type="PANTHER" id="PTHR30309:SF0">
    <property type="entry name" value="GLYCEROL-3-PHOSPHATE ACYLTRANSFERASE-RELATED"/>
    <property type="match status" value="1"/>
</dbReference>
<dbReference type="PANTHER" id="PTHR30309">
    <property type="entry name" value="INNER MEMBRANE PROTEIN YGIH"/>
    <property type="match status" value="1"/>
</dbReference>
<dbReference type="Pfam" id="PF02660">
    <property type="entry name" value="G3P_acyltransf"/>
    <property type="match status" value="1"/>
</dbReference>
<dbReference type="SMART" id="SM01207">
    <property type="entry name" value="G3P_acyltransf"/>
    <property type="match status" value="1"/>
</dbReference>
<name>PLSY_ANAD2</name>
<feature type="chain" id="PRO_1000149561" description="Glycerol-3-phosphate acyltransferase">
    <location>
        <begin position="1"/>
        <end position="201"/>
    </location>
</feature>
<feature type="transmembrane region" description="Helical" evidence="1">
    <location>
        <begin position="5"/>
        <end position="25"/>
    </location>
</feature>
<feature type="transmembrane region" description="Helical" evidence="1">
    <location>
        <begin position="55"/>
        <end position="75"/>
    </location>
</feature>
<feature type="transmembrane region" description="Helical" evidence="1">
    <location>
        <begin position="87"/>
        <end position="107"/>
    </location>
</feature>
<feature type="transmembrane region" description="Helical" evidence="1">
    <location>
        <begin position="118"/>
        <end position="138"/>
    </location>
</feature>
<feature type="transmembrane region" description="Helical" evidence="1">
    <location>
        <begin position="164"/>
        <end position="184"/>
    </location>
</feature>
<comment type="function">
    <text evidence="1">Catalyzes the transfer of an acyl group from acyl-phosphate (acyl-PO(4)) to glycerol-3-phosphate (G3P) to form lysophosphatidic acid (LPA). This enzyme utilizes acyl-phosphate as fatty acyl donor, but not acyl-CoA or acyl-ACP.</text>
</comment>
<comment type="catalytic activity">
    <reaction evidence="1">
        <text>an acyl phosphate + sn-glycerol 3-phosphate = a 1-acyl-sn-glycero-3-phosphate + phosphate</text>
        <dbReference type="Rhea" id="RHEA:34075"/>
        <dbReference type="ChEBI" id="CHEBI:43474"/>
        <dbReference type="ChEBI" id="CHEBI:57597"/>
        <dbReference type="ChEBI" id="CHEBI:57970"/>
        <dbReference type="ChEBI" id="CHEBI:59918"/>
        <dbReference type="EC" id="2.3.1.275"/>
    </reaction>
</comment>
<comment type="pathway">
    <text evidence="1">Lipid metabolism; phospholipid metabolism.</text>
</comment>
<comment type="subunit">
    <text evidence="1">Probably interacts with PlsX.</text>
</comment>
<comment type="subcellular location">
    <subcellularLocation>
        <location evidence="1">Cell inner membrane</location>
        <topology evidence="1">Multi-pass membrane protein</topology>
    </subcellularLocation>
</comment>
<comment type="similarity">
    <text evidence="1">Belongs to the PlsY family.</text>
</comment>
<proteinExistence type="inferred from homology"/>
<gene>
    <name evidence="1" type="primary">plsY</name>
    <name type="ordered locus">A2cp1_4349</name>
</gene>